<accession>P91716</accession>
<name>PER_DROTP</name>
<gene>
    <name type="primary">per</name>
</gene>
<organism>
    <name type="scientific">Drosophila tropicalis</name>
    <name type="common">Fruit fly</name>
    <dbReference type="NCBI Taxonomy" id="46794"/>
    <lineage>
        <taxon>Eukaryota</taxon>
        <taxon>Metazoa</taxon>
        <taxon>Ecdysozoa</taxon>
        <taxon>Arthropoda</taxon>
        <taxon>Hexapoda</taxon>
        <taxon>Insecta</taxon>
        <taxon>Pterygota</taxon>
        <taxon>Neoptera</taxon>
        <taxon>Endopterygota</taxon>
        <taxon>Diptera</taxon>
        <taxon>Brachycera</taxon>
        <taxon>Muscomorpha</taxon>
        <taxon>Ephydroidea</taxon>
        <taxon>Drosophilidae</taxon>
        <taxon>Drosophila</taxon>
        <taxon>Sophophora</taxon>
    </lineage>
</organism>
<feature type="chain" id="PRO_0000162612" description="Period circadian protein">
    <location>
        <begin position="1" status="less than"/>
        <end position="390" status="greater than"/>
    </location>
</feature>
<feature type="region of interest" description="Disordered" evidence="2">
    <location>
        <begin position="27"/>
        <end position="120"/>
    </location>
</feature>
<feature type="region of interest" description="Disordered" evidence="2">
    <location>
        <begin position="164"/>
        <end position="188"/>
    </location>
</feature>
<feature type="region of interest" description="Disordered" evidence="2">
    <location>
        <begin position="247"/>
        <end position="266"/>
    </location>
</feature>
<feature type="region of interest" description="Disordered" evidence="2">
    <location>
        <begin position="327"/>
        <end position="356"/>
    </location>
</feature>
<feature type="compositionally biased region" description="Gly residues" evidence="2">
    <location>
        <begin position="93"/>
        <end position="114"/>
    </location>
</feature>
<feature type="compositionally biased region" description="Gly residues" evidence="2">
    <location>
        <begin position="247"/>
        <end position="256"/>
    </location>
</feature>
<feature type="non-terminal residue">
    <location>
        <position position="1"/>
    </location>
</feature>
<feature type="non-terminal residue">
    <location>
        <position position="390"/>
    </location>
</feature>
<proteinExistence type="inferred from homology"/>
<reference key="1">
    <citation type="journal article" date="1997" name="Mol. Biol. Evol.">
        <title>Interspecific and intraspecific comparisons of the period locus in the Drosophila willistoni sibling species.</title>
        <authorList>
            <person name="Gleason J.M."/>
            <person name="Powell J.R."/>
        </authorList>
    </citation>
    <scope>NUCLEOTIDE SEQUENCE [GENOMIC DNA]</scope>
    <source>
        <strain>0801.0 San Salvador / El Salvador</strain>
    </source>
</reference>
<comment type="function">
    <text evidence="1">Essential for biological clock functions. Determines the period length of circadian and ultradian rhythms; an increase in PER dosage leads to shortened circadian rhythms and a decrease leads to lengthened circadian rhythms. Essential for the circadian rhythmicity of locomotor activity, eclosion behavior, and for the rhythmic component of the male courtship song that originates in the thoracic nervous system. The biological cycle depends on the rhythmic formation and nuclear localization of the TIM-PER complex. Light induces the degradation of TIM, which promotes elimination of PER. Nuclear activity of the heterodimer coordinatively regulates PER and TIM transcription through a negative feedback loop. Behaves as a negative element in circadian transcriptional loop. Does not appear to bind DNA, suggesting indirect transcriptional inhibition (By similarity).</text>
</comment>
<comment type="subunit">
    <text evidence="1">Forms a heterodimer with timeless (TIM); the complex then translocates into the nucleus.</text>
</comment>
<comment type="subcellular location">
    <subcellularLocation>
        <location evidence="1">Nucleus</location>
    </subcellularLocation>
    <subcellularLocation>
        <location evidence="1">Cytoplasm</location>
        <location evidence="1">Perinuclear region</location>
    </subcellularLocation>
    <text evidence="1">Nuclear at specific periods of the day. First accumulates in the perinuclear region about one hour before translocation into the nucleus. Interaction with Tim is required for nuclear localization (By similarity).</text>
</comment>
<comment type="PTM">
    <text evidence="1">Phosphorylated with a circadian rhythmicity, probably by the double-time protein (dbt). Phosphorylation could be implicated in the stability of per monomer and in the formation of heterodimer per-tim (By similarity).</text>
</comment>
<protein>
    <recommendedName>
        <fullName>Period circadian protein</fullName>
    </recommendedName>
</protein>
<keyword id="KW-0090">Biological rhythms</keyword>
<keyword id="KW-0963">Cytoplasm</keyword>
<keyword id="KW-0539">Nucleus</keyword>
<keyword id="KW-0597">Phosphoprotein</keyword>
<keyword id="KW-0677">Repeat</keyword>
<evidence type="ECO:0000250" key="1"/>
<evidence type="ECO:0000256" key="2">
    <source>
        <dbReference type="SAM" id="MobiDB-lite"/>
    </source>
</evidence>
<dbReference type="EMBL" id="U51087">
    <property type="protein sequence ID" value="AAB41395.1"/>
    <property type="molecule type" value="Genomic_DNA"/>
</dbReference>
<dbReference type="GO" id="GO:0005634">
    <property type="term" value="C:nucleus"/>
    <property type="evidence" value="ECO:0007669"/>
    <property type="project" value="UniProtKB-SubCell"/>
</dbReference>
<dbReference type="GO" id="GO:0048471">
    <property type="term" value="C:perinuclear region of cytoplasm"/>
    <property type="evidence" value="ECO:0007669"/>
    <property type="project" value="UniProtKB-SubCell"/>
</dbReference>
<dbReference type="GO" id="GO:0000976">
    <property type="term" value="F:transcription cis-regulatory region binding"/>
    <property type="evidence" value="ECO:0007669"/>
    <property type="project" value="TreeGrafter"/>
</dbReference>
<dbReference type="GO" id="GO:0001222">
    <property type="term" value="F:transcription corepressor binding"/>
    <property type="evidence" value="ECO:0007669"/>
    <property type="project" value="TreeGrafter"/>
</dbReference>
<dbReference type="GO" id="GO:0032922">
    <property type="term" value="P:circadian regulation of gene expression"/>
    <property type="evidence" value="ECO:0007669"/>
    <property type="project" value="TreeGrafter"/>
</dbReference>
<dbReference type="GO" id="GO:0043153">
    <property type="term" value="P:entrainment of circadian clock by photoperiod"/>
    <property type="evidence" value="ECO:0007669"/>
    <property type="project" value="TreeGrafter"/>
</dbReference>
<dbReference type="GO" id="GO:0000122">
    <property type="term" value="P:negative regulation of transcription by RNA polymerase II"/>
    <property type="evidence" value="ECO:0007669"/>
    <property type="project" value="TreeGrafter"/>
</dbReference>
<dbReference type="InterPro" id="IPR050760">
    <property type="entry name" value="Period_circadian_regulator"/>
</dbReference>
<dbReference type="PANTHER" id="PTHR11269">
    <property type="entry name" value="PERIOD CIRCADIAN PROTEIN"/>
    <property type="match status" value="1"/>
</dbReference>
<dbReference type="PANTHER" id="PTHR11269:SF16">
    <property type="entry name" value="PERIOD CIRCADIAN PROTEIN"/>
    <property type="match status" value="1"/>
</dbReference>
<sequence length="390" mass="39544">SSTETPPSYNQLNYNENLLRFFNSKPVTAPVELDPPKVESSYVSSARGEDARSTLSPVQGFEGSGGSGSSGNFTTGSNLHMSSVTNTSNAGTGTSGTGNSGDGGGGGGADGTGSGAAPPVTLTESLLNKHNDEMEKFMLKKHRESRGRSGEKNKKSANEAMKMLEYSGPGPGHGHGIKRGGSHSWEGEANKPKQQLTLNPSGGGGGMPLLLDITHTSSSTQNKGLAGVGVGGAGGGVGGGGSGTGLGGNGNVGSGNGNNNQASTNQYTQSGLPCTQNINLWPPFSVGITTPTSVLSSHTAVAQSSFSPQHSLFPTFYYIPASIAASSPSGTNPSPNRPHKHAHVHSSSEKPSTSQAAAATMPLQYMTGVMYPHPSLFYTHPAAAAATAMV</sequence>